<dbReference type="EMBL" id="AJ242928">
    <property type="protein sequence ID" value="CAB62538.1"/>
    <property type="molecule type" value="mRNA"/>
</dbReference>
<dbReference type="EMBL" id="AF534529">
    <property type="protein sequence ID" value="AAQ10515.1"/>
    <property type="molecule type" value="mRNA"/>
</dbReference>
<dbReference type="EMBL" id="AY373820">
    <property type="protein sequence ID" value="AAR22507.1"/>
    <property type="molecule type" value="mRNA"/>
</dbReference>
<dbReference type="EMBL" id="AB017551">
    <property type="protein sequence ID" value="BAA78341.1"/>
    <property type="molecule type" value="mRNA"/>
</dbReference>
<dbReference type="EMBL" id="AK315309">
    <property type="protein sequence ID" value="BAG37713.1"/>
    <property type="molecule type" value="mRNA"/>
</dbReference>
<dbReference type="EMBL" id="AC068631">
    <property type="status" value="NOT_ANNOTATED_CDS"/>
    <property type="molecule type" value="Genomic_DNA"/>
</dbReference>
<dbReference type="EMBL" id="CH471052">
    <property type="protein sequence ID" value="EAW78186.1"/>
    <property type="molecule type" value="Genomic_DNA"/>
</dbReference>
<dbReference type="EMBL" id="BC069670">
    <property type="protein sequence ID" value="AAH69670.1"/>
    <property type="molecule type" value="mRNA"/>
</dbReference>
<dbReference type="EMBL" id="BC069820">
    <property type="protein sequence ID" value="AAH69820.1"/>
    <property type="molecule type" value="mRNA"/>
</dbReference>
<dbReference type="EMBL" id="BC074734">
    <property type="protein sequence ID" value="AAH74734.1"/>
    <property type="molecule type" value="mRNA"/>
</dbReference>
<dbReference type="EMBL" id="BC114616">
    <property type="protein sequence ID" value="AAI14617.1"/>
    <property type="molecule type" value="mRNA"/>
</dbReference>
<dbReference type="CCDS" id="CCDS3279.1">
    <molecule id="Q9UGM5-1"/>
</dbReference>
<dbReference type="CCDS" id="CCDS82884.1">
    <molecule id="Q9UGM5-2"/>
</dbReference>
<dbReference type="RefSeq" id="NP_001295006.1">
    <molecule id="Q9UGM5-2"/>
    <property type="nucleotide sequence ID" value="NM_001308077.4"/>
</dbReference>
<dbReference type="RefSeq" id="NP_001295008.1">
    <property type="nucleotide sequence ID" value="NM_001308079.1"/>
</dbReference>
<dbReference type="RefSeq" id="NP_001362516.1">
    <molecule id="Q9UGM5-1"/>
    <property type="nucleotide sequence ID" value="NM_001375587.2"/>
</dbReference>
<dbReference type="RefSeq" id="NP_055190.2">
    <molecule id="Q9UGM5-1"/>
    <property type="nucleotide sequence ID" value="NM_014375.3"/>
</dbReference>
<dbReference type="RefSeq" id="XP_011510983.1">
    <property type="nucleotide sequence ID" value="XM_011512681.2"/>
</dbReference>
<dbReference type="PDB" id="6SAZ">
    <property type="method" value="X-ray"/>
    <property type="resolution" value="3.00 A"/>
    <property type="chains" value="B/D=1-382"/>
</dbReference>
<dbReference type="PDB" id="7UAI">
    <property type="method" value="EM"/>
    <property type="resolution" value="2.80 A"/>
    <property type="chains" value="A/H=1-382"/>
</dbReference>
<dbReference type="PDBsum" id="6SAZ"/>
<dbReference type="PDBsum" id="7UAI"/>
<dbReference type="EMDB" id="EMD-26426"/>
<dbReference type="SMR" id="Q9UGM5"/>
<dbReference type="BioGRID" id="117944">
    <property type="interactions" value="9"/>
</dbReference>
<dbReference type="FunCoup" id="Q9UGM5">
    <property type="interactions" value="74"/>
</dbReference>
<dbReference type="IntAct" id="Q9UGM5">
    <property type="interactions" value="6"/>
</dbReference>
<dbReference type="STRING" id="9606.ENSP00000265029"/>
<dbReference type="MEROPS" id="I25.067"/>
<dbReference type="MEROPS" id="I25.950"/>
<dbReference type="GlyConnect" id="1234">
    <property type="glycosylation" value="15 N-Linked glycans (2 sites)"/>
</dbReference>
<dbReference type="GlyCosmos" id="Q9UGM5">
    <property type="glycosylation" value="9 sites, 19 glycans"/>
</dbReference>
<dbReference type="GlyGen" id="Q9UGM5">
    <property type="glycosylation" value="9 sites, 31 N-linked glycans (3 sites), 2 O-linked glycans (5 sites)"/>
</dbReference>
<dbReference type="iPTMnet" id="Q9UGM5"/>
<dbReference type="PhosphoSitePlus" id="Q9UGM5"/>
<dbReference type="BioMuta" id="FETUB"/>
<dbReference type="DMDM" id="109940079"/>
<dbReference type="CPTAC" id="non-CPTAC-1115"/>
<dbReference type="CPTAC" id="non-CPTAC-1116"/>
<dbReference type="jPOST" id="Q9UGM5"/>
<dbReference type="MassIVE" id="Q9UGM5"/>
<dbReference type="PaxDb" id="9606-ENSP00000265029"/>
<dbReference type="PeptideAtlas" id="Q9UGM5"/>
<dbReference type="ProteomicsDB" id="20217"/>
<dbReference type="ProteomicsDB" id="84243">
    <molecule id="Q9UGM5-1"/>
</dbReference>
<dbReference type="Antibodypedia" id="33852">
    <property type="antibodies" value="292 antibodies from 28 providers"/>
</dbReference>
<dbReference type="DNASU" id="26998"/>
<dbReference type="Ensembl" id="ENST00000265029.8">
    <molecule id="Q9UGM5-1"/>
    <property type="protein sequence ID" value="ENSP00000265029.3"/>
    <property type="gene ID" value="ENSG00000090512.12"/>
</dbReference>
<dbReference type="Ensembl" id="ENST00000382136.3">
    <molecule id="Q9UGM5-2"/>
    <property type="protein sequence ID" value="ENSP00000371571.3"/>
    <property type="gene ID" value="ENSG00000090512.12"/>
</dbReference>
<dbReference type="Ensembl" id="ENST00000450521.5">
    <molecule id="Q9UGM5-1"/>
    <property type="protein sequence ID" value="ENSP00000404288.1"/>
    <property type="gene ID" value="ENSG00000090512.12"/>
</dbReference>
<dbReference type="GeneID" id="26998"/>
<dbReference type="KEGG" id="hsa:26998"/>
<dbReference type="MANE-Select" id="ENST00000265029.8">
    <property type="protein sequence ID" value="ENSP00000265029.3"/>
    <property type="RefSeq nucleotide sequence ID" value="NM_014375.3"/>
    <property type="RefSeq protein sequence ID" value="NP_055190.2"/>
</dbReference>
<dbReference type="UCSC" id="uc003fqn.3">
    <molecule id="Q9UGM5-1"/>
    <property type="organism name" value="human"/>
</dbReference>
<dbReference type="AGR" id="HGNC:3658"/>
<dbReference type="CTD" id="26998"/>
<dbReference type="DisGeNET" id="26998"/>
<dbReference type="GeneCards" id="FETUB"/>
<dbReference type="HGNC" id="HGNC:3658">
    <property type="gene designation" value="FETUB"/>
</dbReference>
<dbReference type="HPA" id="ENSG00000090512">
    <property type="expression patterns" value="Tissue enriched (liver)"/>
</dbReference>
<dbReference type="MIM" id="605954">
    <property type="type" value="gene"/>
</dbReference>
<dbReference type="neXtProt" id="NX_Q9UGM5"/>
<dbReference type="OpenTargets" id="ENSG00000090512"/>
<dbReference type="PharmGKB" id="PA28099"/>
<dbReference type="VEuPathDB" id="HostDB:ENSG00000090512"/>
<dbReference type="eggNOG" id="ENOG502S28K">
    <property type="taxonomic scope" value="Eukaryota"/>
</dbReference>
<dbReference type="GeneTree" id="ENSGT00950000182930"/>
<dbReference type="HOGENOM" id="CLU_044085_1_0_1"/>
<dbReference type="InParanoid" id="Q9UGM5"/>
<dbReference type="OMA" id="NCQFAHR"/>
<dbReference type="OrthoDB" id="9941887at2759"/>
<dbReference type="PAN-GO" id="Q9UGM5">
    <property type="GO annotations" value="4 GO annotations based on evolutionary models"/>
</dbReference>
<dbReference type="PhylomeDB" id="Q9UGM5"/>
<dbReference type="TreeFam" id="TF333729"/>
<dbReference type="PathwayCommons" id="Q9UGM5"/>
<dbReference type="SignaLink" id="Q9UGM5"/>
<dbReference type="BioGRID-ORCS" id="26998">
    <property type="hits" value="16 hits in 1138 CRISPR screens"/>
</dbReference>
<dbReference type="GeneWiki" id="Fetuin-B"/>
<dbReference type="GenomeRNAi" id="26998"/>
<dbReference type="Pharos" id="Q9UGM5">
    <property type="development level" value="Tbio"/>
</dbReference>
<dbReference type="PRO" id="PR:Q9UGM5"/>
<dbReference type="Proteomes" id="UP000005640">
    <property type="component" value="Chromosome 3"/>
</dbReference>
<dbReference type="RNAct" id="Q9UGM5">
    <property type="molecule type" value="protein"/>
</dbReference>
<dbReference type="Bgee" id="ENSG00000090512">
    <property type="expression patterns" value="Expressed in right lobe of liver and 72 other cell types or tissues"/>
</dbReference>
<dbReference type="ExpressionAtlas" id="Q9UGM5">
    <property type="expression patterns" value="baseline and differential"/>
</dbReference>
<dbReference type="GO" id="GO:0070062">
    <property type="term" value="C:extracellular exosome"/>
    <property type="evidence" value="ECO:0007005"/>
    <property type="project" value="UniProtKB"/>
</dbReference>
<dbReference type="GO" id="GO:0005576">
    <property type="term" value="C:extracellular region"/>
    <property type="evidence" value="ECO:0000318"/>
    <property type="project" value="GO_Central"/>
</dbReference>
<dbReference type="GO" id="GO:0004869">
    <property type="term" value="F:cysteine-type endopeptidase inhibitor activity"/>
    <property type="evidence" value="ECO:0007669"/>
    <property type="project" value="InterPro"/>
</dbReference>
<dbReference type="GO" id="GO:0008191">
    <property type="term" value="F:metalloendopeptidase inhibitor activity"/>
    <property type="evidence" value="ECO:0000250"/>
    <property type="project" value="UniProtKB"/>
</dbReference>
<dbReference type="GO" id="GO:0007339">
    <property type="term" value="P:binding of sperm to zona pellucida"/>
    <property type="evidence" value="ECO:0000250"/>
    <property type="project" value="UniProtKB"/>
</dbReference>
<dbReference type="GO" id="GO:0010951">
    <property type="term" value="P:negative regulation of endopeptidase activity"/>
    <property type="evidence" value="ECO:0000250"/>
    <property type="project" value="UniProtKB"/>
</dbReference>
<dbReference type="GO" id="GO:0007338">
    <property type="term" value="P:single fertilization"/>
    <property type="evidence" value="ECO:0000250"/>
    <property type="project" value="UniProtKB"/>
</dbReference>
<dbReference type="CDD" id="cd00042">
    <property type="entry name" value="CY"/>
    <property type="match status" value="2"/>
</dbReference>
<dbReference type="FunFam" id="3.10.450.10:FF:000022">
    <property type="entry name" value="Fetuin B"/>
    <property type="match status" value="1"/>
</dbReference>
<dbReference type="FunFam" id="3.10.450.10:FF:000005">
    <property type="entry name" value="Histidine-rich glycoprotein"/>
    <property type="match status" value="1"/>
</dbReference>
<dbReference type="Gene3D" id="3.10.450.10">
    <property type="match status" value="2"/>
</dbReference>
<dbReference type="InterPro" id="IPR000010">
    <property type="entry name" value="Cystatin_dom"/>
</dbReference>
<dbReference type="InterPro" id="IPR025764">
    <property type="entry name" value="Cystatin_Fetuin_B"/>
</dbReference>
<dbReference type="InterPro" id="IPR046350">
    <property type="entry name" value="Cystatin_sf"/>
</dbReference>
<dbReference type="InterPro" id="IPR050735">
    <property type="entry name" value="Kininogen_Fetuin_HRG"/>
</dbReference>
<dbReference type="InterPro" id="IPR001363">
    <property type="entry name" value="Prot_inh_fetuin_CS"/>
</dbReference>
<dbReference type="PANTHER" id="PTHR13814">
    <property type="entry name" value="FETUIN"/>
    <property type="match status" value="1"/>
</dbReference>
<dbReference type="PANTHER" id="PTHR13814:SF10">
    <property type="entry name" value="FETUIN-B"/>
    <property type="match status" value="1"/>
</dbReference>
<dbReference type="Pfam" id="PF00031">
    <property type="entry name" value="Cystatin"/>
    <property type="match status" value="2"/>
</dbReference>
<dbReference type="SMART" id="SM00043">
    <property type="entry name" value="CY"/>
    <property type="match status" value="2"/>
</dbReference>
<dbReference type="SUPFAM" id="SSF54403">
    <property type="entry name" value="Cystatin/monellin"/>
    <property type="match status" value="2"/>
</dbReference>
<dbReference type="PROSITE" id="PS51530">
    <property type="entry name" value="CYSTATIN_FETUIN_B"/>
    <property type="match status" value="2"/>
</dbReference>
<dbReference type="PROSITE" id="PS01254">
    <property type="entry name" value="FETUIN_1"/>
    <property type="match status" value="1"/>
</dbReference>
<dbReference type="PROSITE" id="PS01255">
    <property type="entry name" value="FETUIN_2"/>
    <property type="match status" value="1"/>
</dbReference>
<organism>
    <name type="scientific">Homo sapiens</name>
    <name type="common">Human</name>
    <dbReference type="NCBI Taxonomy" id="9606"/>
    <lineage>
        <taxon>Eukaryota</taxon>
        <taxon>Metazoa</taxon>
        <taxon>Chordata</taxon>
        <taxon>Craniata</taxon>
        <taxon>Vertebrata</taxon>
        <taxon>Euteleostomi</taxon>
        <taxon>Mammalia</taxon>
        <taxon>Eutheria</taxon>
        <taxon>Euarchontoglires</taxon>
        <taxon>Primates</taxon>
        <taxon>Haplorrhini</taxon>
        <taxon>Catarrhini</taxon>
        <taxon>Hominidae</taxon>
        <taxon>Homo</taxon>
    </lineage>
</organism>
<keyword id="KW-0002">3D-structure</keyword>
<keyword id="KW-0025">Alternative splicing</keyword>
<keyword id="KW-1015">Disulfide bond</keyword>
<keyword id="KW-0278">Fertilization</keyword>
<keyword id="KW-0325">Glycoprotein</keyword>
<keyword id="KW-0481">Metalloenzyme inhibitor</keyword>
<keyword id="KW-0483">Metalloprotease inhibitor</keyword>
<keyword id="KW-0597">Phosphoprotein</keyword>
<keyword id="KW-0646">Protease inhibitor</keyword>
<keyword id="KW-1267">Proteomics identification</keyword>
<keyword id="KW-1185">Reference proteome</keyword>
<keyword id="KW-0677">Repeat</keyword>
<keyword id="KW-0964">Secreted</keyword>
<keyword id="KW-0732">Signal</keyword>
<accession>Q9UGM5</accession>
<accession>B2RCW6</accession>
<accession>E9PG06</accession>
<accession>Q1RMZ0</accession>
<accession>Q5J876</accession>
<accession>Q6DK58</accession>
<accession>Q6GRB6</accession>
<accession>Q9Y6Z0</accession>
<sequence>MGLLLPLALCILVLCCGAMSPPQLALNPSALLSRGCNDSDVLAVAGFALRDINKDRKDGYVLRLNRVNDAQEYRRGGLGSLFYLTLDVLETDCHVLRKKAWQDCGMRIFFESVYGQCKAIFYMNNPSRVLYLAAYNCTLRPVSKKKIYMTCPDCPSSIPTDSSNHQVLEAATESLAKYNNENTSKQYSLFKVTRASSQWVVGPSYFVEYLIKESPCTKSQASSCSLQSSDSVPVGLCKGSLTRTHWEKFVSVTCDFFESQAPATGSENSAVNQKPTNLPKVEESQQKNTPPTDSPSKAGPRGSVQYLPDLDDKNSQEKGPQEAFPVHLDLTTNPQGETLDISFLFLEPMEEKLVVLPFPKEKARTAECPGPAQNASPLVLPP</sequence>
<comment type="function">
    <text evidence="1">Protease inhibitor required for egg fertilization. Required to prevent premature zona pellucida hardening before fertilization, probably by inhibiting the protease activity of ASTL, a protease that mediates the cleavage of ZP2 and triggers zona pellucida hardening (By similarity).</text>
</comment>
<comment type="interaction">
    <interactant intactId="EBI-13049494">
        <id>Q9UGM5</id>
    </interactant>
    <interactant intactId="EBI-6942903">
        <id>Q96BA8</id>
        <label>CREB3L1</label>
    </interactant>
    <organismsDiffer>false</organismsDiffer>
    <experiments>3</experiments>
</comment>
<comment type="interaction">
    <interactant intactId="EBI-13049494">
        <id>Q9UGM5</id>
    </interactant>
    <interactant intactId="EBI-3917045">
        <id>Q6PI48</id>
        <label>DARS2</label>
    </interactant>
    <organismsDiffer>false</organismsDiffer>
    <experiments>3</experiments>
</comment>
<comment type="interaction">
    <interactant intactId="EBI-13049494">
        <id>Q9UGM5</id>
    </interactant>
    <interactant intactId="EBI-3915253">
        <id>Q15125</id>
        <label>EBP</label>
    </interactant>
    <organismsDiffer>false</organismsDiffer>
    <experiments>3</experiments>
</comment>
<comment type="interaction">
    <interactant intactId="EBI-13049494">
        <id>Q9UGM5</id>
    </interactant>
    <interactant intactId="EBI-781551">
        <id>Q9Y282</id>
        <label>ERGIC3</label>
    </interactant>
    <organismsDiffer>false</organismsDiffer>
    <experiments>3</experiments>
</comment>
<comment type="interaction">
    <interactant intactId="EBI-13049494">
        <id>Q9UGM5</id>
    </interactant>
    <interactant intactId="EBI-18053395">
        <id>Q7Z5P4</id>
        <label>HSD17B13</label>
    </interactant>
    <organismsDiffer>false</organismsDiffer>
    <experiments>3</experiments>
</comment>
<comment type="interaction">
    <interactant intactId="EBI-13049494">
        <id>Q9UGM5</id>
    </interactant>
    <interactant intactId="EBI-3923617">
        <id>Q9H2K0</id>
        <label>MTIF3</label>
    </interactant>
    <organismsDiffer>false</organismsDiffer>
    <experiments>3</experiments>
</comment>
<comment type="subcellular location">
    <subcellularLocation>
        <location evidence="1">Secreted</location>
    </subcellularLocation>
</comment>
<comment type="alternative products">
    <event type="alternative splicing"/>
    <isoform>
        <id>Q9UGM5-1</id>
        <name>1</name>
        <sequence type="displayed"/>
    </isoform>
    <isoform>
        <id>Q9UGM5-2</id>
        <name>2</name>
        <name>Beta</name>
        <sequence type="described" ref="VSP_047135"/>
    </isoform>
</comment>
<comment type="tissue specificity">
    <text>Liver and testis.</text>
</comment>
<comment type="developmental stage">
    <text evidence="7">2-fold increase toward the end of the menstrual cycle.</text>
</comment>
<comment type="similarity">
    <text evidence="4">Belongs to the fetuin family.</text>
</comment>
<name>FETUB_HUMAN</name>
<proteinExistence type="evidence at protein level"/>
<feature type="signal peptide" evidence="3">
    <location>
        <begin position="1"/>
        <end position="15"/>
    </location>
</feature>
<feature type="chain" id="PRO_0000008899" description="Fetuin-B">
    <location>
        <begin position="16"/>
        <end position="382"/>
    </location>
</feature>
<feature type="domain" description="Cystatin fetuin-B-type 1" evidence="4">
    <location>
        <begin position="25"/>
        <end position="138"/>
    </location>
</feature>
<feature type="domain" description="Cystatin fetuin-B-type 2" evidence="4">
    <location>
        <begin position="149"/>
        <end position="255"/>
    </location>
</feature>
<feature type="region of interest" description="Disordered" evidence="5">
    <location>
        <begin position="262"/>
        <end position="320"/>
    </location>
</feature>
<feature type="region of interest" description="Disordered" evidence="5">
    <location>
        <begin position="363"/>
        <end position="382"/>
    </location>
</feature>
<feature type="compositionally biased region" description="Polar residues" evidence="5">
    <location>
        <begin position="262"/>
        <end position="276"/>
    </location>
</feature>
<feature type="compositionally biased region" description="Polar residues" evidence="5">
    <location>
        <begin position="286"/>
        <end position="295"/>
    </location>
</feature>
<feature type="compositionally biased region" description="Basic and acidic residues" evidence="5">
    <location>
        <begin position="310"/>
        <end position="320"/>
    </location>
</feature>
<feature type="modified residue" description="Phosphoserine" evidence="10">
    <location>
        <position position="315"/>
    </location>
</feature>
<feature type="glycosylation site" description="N-linked (GlcNAc...) asparagine" evidence="6">
    <location>
        <position position="37"/>
    </location>
</feature>
<feature type="glycosylation site" description="N-linked (GlcNAc...) asparagine" evidence="6">
    <location>
        <position position="136"/>
    </location>
</feature>
<feature type="glycosylation site" description="N-linked (GlcNAc...) asparagine" evidence="3">
    <location>
        <position position="182"/>
    </location>
</feature>
<feature type="glycosylation site" description="O-linked (GalNAc...) threonine" evidence="2">
    <location>
        <position position="289"/>
    </location>
</feature>
<feature type="glycosylation site" description="O-linked (GalNAc...) threonine" evidence="2">
    <location>
        <position position="292"/>
    </location>
</feature>
<feature type="disulfide bond" evidence="4">
    <location>
        <begin position="93"/>
        <end position="104"/>
    </location>
</feature>
<feature type="disulfide bond" evidence="4">
    <location>
        <begin position="117"/>
        <end position="137"/>
    </location>
</feature>
<feature type="disulfide bond" evidence="4">
    <location>
        <begin position="151"/>
        <end position="154"/>
    </location>
</feature>
<feature type="disulfide bond" evidence="4">
    <location>
        <begin position="216"/>
        <end position="224"/>
    </location>
</feature>
<feature type="disulfide bond" evidence="4">
    <location>
        <begin position="237"/>
        <end position="254"/>
    </location>
</feature>
<feature type="splice variant" id="VSP_047135" description="In isoform 2." evidence="8">
    <location>
        <begin position="76"/>
        <end position="112"/>
    </location>
</feature>
<feature type="sequence variant" id="VAR_049061" description="In dbSNP:rs34522046.">
    <original>S</original>
    <variation>P</variation>
    <location>
        <position position="33"/>
    </location>
</feature>
<feature type="sequence variant" id="VAR_024449" description="In dbSNP:rs6785067.">
    <original>G</original>
    <variation>S</variation>
    <location>
        <position position="202"/>
    </location>
</feature>
<feature type="sequence variant" id="VAR_049062" description="In dbSNP:rs7999.">
    <original>K</original>
    <variation>R</variation>
    <location>
        <position position="360"/>
    </location>
</feature>
<feature type="sequence conflict" description="In Ref. 2; AAR22507." evidence="9" ref="2">
    <original>L</original>
    <variation>F</variation>
    <location>
        <position position="4"/>
    </location>
</feature>
<feature type="sequence conflict" description="In Ref. 7; AAH74734." evidence="9" ref="7">
    <original>L</original>
    <variation>P</variation>
    <location>
        <position position="9"/>
    </location>
</feature>
<feature type="sequence conflict" description="In Ref. 1; CAB62538." evidence="9" ref="1">
    <original>AM</original>
    <variation>KL</variation>
    <location>
        <begin position="18"/>
        <end position="19"/>
    </location>
</feature>
<feature type="sequence conflict" description="In Ref. 7; AAH74734." evidence="9" ref="7">
    <original>N</original>
    <variation>K</variation>
    <location>
        <position position="179"/>
    </location>
</feature>
<feature type="sequence conflict" description="In Ref. 7; AAI14617." evidence="9" ref="7">
    <original>S</original>
    <variation>P</variation>
    <location>
        <position position="303"/>
    </location>
</feature>
<feature type="strand" evidence="11">
    <location>
        <begin position="31"/>
        <end position="34"/>
    </location>
</feature>
<feature type="helix" evidence="12">
    <location>
        <begin position="39"/>
        <end position="55"/>
    </location>
</feature>
<feature type="strand" evidence="12">
    <location>
        <begin position="58"/>
        <end position="73"/>
    </location>
</feature>
<feature type="strand" evidence="12">
    <location>
        <begin position="80"/>
        <end position="94"/>
    </location>
</feature>
<feature type="helix" evidence="11">
    <location>
        <begin position="95"/>
        <end position="97"/>
    </location>
</feature>
<feature type="helix" evidence="12">
    <location>
        <begin position="101"/>
        <end position="103"/>
    </location>
</feature>
<feature type="helix" evidence="12">
    <location>
        <begin position="109"/>
        <end position="111"/>
    </location>
</feature>
<feature type="strand" evidence="12">
    <location>
        <begin position="113"/>
        <end position="124"/>
    </location>
</feature>
<feature type="turn" evidence="12">
    <location>
        <begin position="125"/>
        <end position="128"/>
    </location>
</feature>
<feature type="strand" evidence="12">
    <location>
        <begin position="129"/>
        <end position="141"/>
    </location>
</feature>
<feature type="helix" evidence="12">
    <location>
        <begin position="144"/>
        <end position="150"/>
    </location>
</feature>
<feature type="strand" evidence="11">
    <location>
        <begin position="152"/>
        <end position="154"/>
    </location>
</feature>
<feature type="strand" evidence="11">
    <location>
        <begin position="156"/>
        <end position="158"/>
    </location>
</feature>
<feature type="strand" evidence="11">
    <location>
        <begin position="160"/>
        <end position="162"/>
    </location>
</feature>
<feature type="helix" evidence="12">
    <location>
        <begin position="165"/>
        <end position="181"/>
    </location>
</feature>
<feature type="strand" evidence="12">
    <location>
        <begin position="187"/>
        <end position="198"/>
    </location>
</feature>
<feature type="strand" evidence="11">
    <location>
        <begin position="200"/>
        <end position="202"/>
    </location>
</feature>
<feature type="strand" evidence="12">
    <location>
        <begin position="204"/>
        <end position="213"/>
    </location>
</feature>
<feature type="strand" evidence="12">
    <location>
        <begin position="235"/>
        <end position="244"/>
    </location>
</feature>
<feature type="strand" evidence="12">
    <location>
        <begin position="247"/>
        <end position="252"/>
    </location>
</feature>
<feature type="strand" evidence="12">
    <location>
        <begin position="302"/>
        <end position="306"/>
    </location>
</feature>
<feature type="strand" evidence="12">
    <location>
        <begin position="337"/>
        <end position="340"/>
    </location>
</feature>
<feature type="helix" evidence="12">
    <location>
        <begin position="342"/>
        <end position="344"/>
    </location>
</feature>
<feature type="strand" evidence="12">
    <location>
        <begin position="352"/>
        <end position="355"/>
    </location>
</feature>
<feature type="helix" evidence="12">
    <location>
        <begin position="377"/>
        <end position="379"/>
    </location>
</feature>
<reference key="1">
    <citation type="journal article" date="2000" name="Biochem. J.">
        <title>Fetuin-B, a second member of the fetuin family in mammals.</title>
        <authorList>
            <person name="Olivier E."/>
            <person name="Soury E."/>
            <person name="Ruminy P."/>
            <person name="Husson A."/>
            <person name="Parmentier F."/>
            <person name="Daveau M."/>
            <person name="Salier J.-P."/>
        </authorList>
    </citation>
    <scope>NUCLEOTIDE SEQUENCE [MRNA]</scope>
    <source>
        <tissue>Fetus</tissue>
    </source>
</reference>
<reference key="2">
    <citation type="journal article" date="2004" name="Genome">
        <title>Identification of fetuin-B as a member of a cystatin-like gene family on mouse chromosome 16 with tumor suppressor activity.</title>
        <authorList>
            <person name="Hsu S.J."/>
            <person name="Nagase H."/>
            <person name="Balmain A."/>
        </authorList>
    </citation>
    <scope>NUCLEOTIDE SEQUENCE [MRNA] (ISOFORMS 1 AND 2)</scope>
</reference>
<reference key="3">
    <citation type="submission" date="1998-09" db="EMBL/GenBank/DDBJ databases">
        <title>H16G2, a gene specifically expressed in the liver.</title>
        <authorList>
            <person name="Aihara T."/>
            <person name="Miyoshi Y."/>
            <person name="Nakamura Y."/>
        </authorList>
    </citation>
    <scope>NUCLEOTIDE SEQUENCE [MRNA] (ISOFORM 1)</scope>
    <source>
        <tissue>Liver</tissue>
    </source>
</reference>
<reference key="4">
    <citation type="journal article" date="2004" name="Nat. Genet.">
        <title>Complete sequencing and characterization of 21,243 full-length human cDNAs.</title>
        <authorList>
            <person name="Ota T."/>
            <person name="Suzuki Y."/>
            <person name="Nishikawa T."/>
            <person name="Otsuki T."/>
            <person name="Sugiyama T."/>
            <person name="Irie R."/>
            <person name="Wakamatsu A."/>
            <person name="Hayashi K."/>
            <person name="Sato H."/>
            <person name="Nagai K."/>
            <person name="Kimura K."/>
            <person name="Makita H."/>
            <person name="Sekine M."/>
            <person name="Obayashi M."/>
            <person name="Nishi T."/>
            <person name="Shibahara T."/>
            <person name="Tanaka T."/>
            <person name="Ishii S."/>
            <person name="Yamamoto J."/>
            <person name="Saito K."/>
            <person name="Kawai Y."/>
            <person name="Isono Y."/>
            <person name="Nakamura Y."/>
            <person name="Nagahari K."/>
            <person name="Murakami K."/>
            <person name="Yasuda T."/>
            <person name="Iwayanagi T."/>
            <person name="Wagatsuma M."/>
            <person name="Shiratori A."/>
            <person name="Sudo H."/>
            <person name="Hosoiri T."/>
            <person name="Kaku Y."/>
            <person name="Kodaira H."/>
            <person name="Kondo H."/>
            <person name="Sugawara M."/>
            <person name="Takahashi M."/>
            <person name="Kanda K."/>
            <person name="Yokoi T."/>
            <person name="Furuya T."/>
            <person name="Kikkawa E."/>
            <person name="Omura Y."/>
            <person name="Abe K."/>
            <person name="Kamihara K."/>
            <person name="Katsuta N."/>
            <person name="Sato K."/>
            <person name="Tanikawa M."/>
            <person name="Yamazaki M."/>
            <person name="Ninomiya K."/>
            <person name="Ishibashi T."/>
            <person name="Yamashita H."/>
            <person name="Murakawa K."/>
            <person name="Fujimori K."/>
            <person name="Tanai H."/>
            <person name="Kimata M."/>
            <person name="Watanabe M."/>
            <person name="Hiraoka S."/>
            <person name="Chiba Y."/>
            <person name="Ishida S."/>
            <person name="Ono Y."/>
            <person name="Takiguchi S."/>
            <person name="Watanabe S."/>
            <person name="Yosida M."/>
            <person name="Hotuta T."/>
            <person name="Kusano J."/>
            <person name="Kanehori K."/>
            <person name="Takahashi-Fujii A."/>
            <person name="Hara H."/>
            <person name="Tanase T.-O."/>
            <person name="Nomura Y."/>
            <person name="Togiya S."/>
            <person name="Komai F."/>
            <person name="Hara R."/>
            <person name="Takeuchi K."/>
            <person name="Arita M."/>
            <person name="Imose N."/>
            <person name="Musashino K."/>
            <person name="Yuuki H."/>
            <person name="Oshima A."/>
            <person name="Sasaki N."/>
            <person name="Aotsuka S."/>
            <person name="Yoshikawa Y."/>
            <person name="Matsunawa H."/>
            <person name="Ichihara T."/>
            <person name="Shiohata N."/>
            <person name="Sano S."/>
            <person name="Moriya S."/>
            <person name="Momiyama H."/>
            <person name="Satoh N."/>
            <person name="Takami S."/>
            <person name="Terashima Y."/>
            <person name="Suzuki O."/>
            <person name="Nakagawa S."/>
            <person name="Senoh A."/>
            <person name="Mizoguchi H."/>
            <person name="Goto Y."/>
            <person name="Shimizu F."/>
            <person name="Wakebe H."/>
            <person name="Hishigaki H."/>
            <person name="Watanabe T."/>
            <person name="Sugiyama A."/>
            <person name="Takemoto M."/>
            <person name="Kawakami B."/>
            <person name="Yamazaki M."/>
            <person name="Watanabe K."/>
            <person name="Kumagai A."/>
            <person name="Itakura S."/>
            <person name="Fukuzumi Y."/>
            <person name="Fujimori Y."/>
            <person name="Komiyama M."/>
            <person name="Tashiro H."/>
            <person name="Tanigami A."/>
            <person name="Fujiwara T."/>
            <person name="Ono T."/>
            <person name="Yamada K."/>
            <person name="Fujii Y."/>
            <person name="Ozaki K."/>
            <person name="Hirao M."/>
            <person name="Ohmori Y."/>
            <person name="Kawabata A."/>
            <person name="Hikiji T."/>
            <person name="Kobatake N."/>
            <person name="Inagaki H."/>
            <person name="Ikema Y."/>
            <person name="Okamoto S."/>
            <person name="Okitani R."/>
            <person name="Kawakami T."/>
            <person name="Noguchi S."/>
            <person name="Itoh T."/>
            <person name="Shigeta K."/>
            <person name="Senba T."/>
            <person name="Matsumura K."/>
            <person name="Nakajima Y."/>
            <person name="Mizuno T."/>
            <person name="Morinaga M."/>
            <person name="Sasaki M."/>
            <person name="Togashi T."/>
            <person name="Oyama M."/>
            <person name="Hata H."/>
            <person name="Watanabe M."/>
            <person name="Komatsu T."/>
            <person name="Mizushima-Sugano J."/>
            <person name="Satoh T."/>
            <person name="Shirai Y."/>
            <person name="Takahashi Y."/>
            <person name="Nakagawa K."/>
            <person name="Okumura K."/>
            <person name="Nagase T."/>
            <person name="Nomura N."/>
            <person name="Kikuchi H."/>
            <person name="Masuho Y."/>
            <person name="Yamashita R."/>
            <person name="Nakai K."/>
            <person name="Yada T."/>
            <person name="Nakamura Y."/>
            <person name="Ohara O."/>
            <person name="Isogai T."/>
            <person name="Sugano S."/>
        </authorList>
    </citation>
    <scope>NUCLEOTIDE SEQUENCE [LARGE SCALE MRNA] (ISOFORM 1)</scope>
    <source>
        <tissue>Tongue</tissue>
    </source>
</reference>
<reference key="5">
    <citation type="journal article" date="2006" name="Nature">
        <title>The DNA sequence, annotation and analysis of human chromosome 3.</title>
        <authorList>
            <person name="Muzny D.M."/>
            <person name="Scherer S.E."/>
            <person name="Kaul R."/>
            <person name="Wang J."/>
            <person name="Yu J."/>
            <person name="Sudbrak R."/>
            <person name="Buhay C.J."/>
            <person name="Chen R."/>
            <person name="Cree A."/>
            <person name="Ding Y."/>
            <person name="Dugan-Rocha S."/>
            <person name="Gill R."/>
            <person name="Gunaratne P."/>
            <person name="Harris R.A."/>
            <person name="Hawes A.C."/>
            <person name="Hernandez J."/>
            <person name="Hodgson A.V."/>
            <person name="Hume J."/>
            <person name="Jackson A."/>
            <person name="Khan Z.M."/>
            <person name="Kovar-Smith C."/>
            <person name="Lewis L.R."/>
            <person name="Lozado R.J."/>
            <person name="Metzker M.L."/>
            <person name="Milosavljevic A."/>
            <person name="Miner G.R."/>
            <person name="Morgan M.B."/>
            <person name="Nazareth L.V."/>
            <person name="Scott G."/>
            <person name="Sodergren E."/>
            <person name="Song X.-Z."/>
            <person name="Steffen D."/>
            <person name="Wei S."/>
            <person name="Wheeler D.A."/>
            <person name="Wright M.W."/>
            <person name="Worley K.C."/>
            <person name="Yuan Y."/>
            <person name="Zhang Z."/>
            <person name="Adams C.Q."/>
            <person name="Ansari-Lari M.A."/>
            <person name="Ayele M."/>
            <person name="Brown M.J."/>
            <person name="Chen G."/>
            <person name="Chen Z."/>
            <person name="Clendenning J."/>
            <person name="Clerc-Blankenburg K.P."/>
            <person name="Chen R."/>
            <person name="Chen Z."/>
            <person name="Davis C."/>
            <person name="Delgado O."/>
            <person name="Dinh H.H."/>
            <person name="Dong W."/>
            <person name="Draper H."/>
            <person name="Ernst S."/>
            <person name="Fu G."/>
            <person name="Gonzalez-Garay M.L."/>
            <person name="Garcia D.K."/>
            <person name="Gillett W."/>
            <person name="Gu J."/>
            <person name="Hao B."/>
            <person name="Haugen E."/>
            <person name="Havlak P."/>
            <person name="He X."/>
            <person name="Hennig S."/>
            <person name="Hu S."/>
            <person name="Huang W."/>
            <person name="Jackson L.R."/>
            <person name="Jacob L.S."/>
            <person name="Kelly S.H."/>
            <person name="Kube M."/>
            <person name="Levy R."/>
            <person name="Li Z."/>
            <person name="Liu B."/>
            <person name="Liu J."/>
            <person name="Liu W."/>
            <person name="Lu J."/>
            <person name="Maheshwari M."/>
            <person name="Nguyen B.-V."/>
            <person name="Okwuonu G.O."/>
            <person name="Palmeiri A."/>
            <person name="Pasternak S."/>
            <person name="Perez L.M."/>
            <person name="Phelps K.A."/>
            <person name="Plopper F.J."/>
            <person name="Qiang B."/>
            <person name="Raymond C."/>
            <person name="Rodriguez R."/>
            <person name="Saenphimmachak C."/>
            <person name="Santibanez J."/>
            <person name="Shen H."/>
            <person name="Shen Y."/>
            <person name="Subramanian S."/>
            <person name="Tabor P.E."/>
            <person name="Verduzco D."/>
            <person name="Waldron L."/>
            <person name="Wang J."/>
            <person name="Wang J."/>
            <person name="Wang Q."/>
            <person name="Williams G.A."/>
            <person name="Wong G.K.-S."/>
            <person name="Yao Z."/>
            <person name="Zhang J."/>
            <person name="Zhang X."/>
            <person name="Zhao G."/>
            <person name="Zhou J."/>
            <person name="Zhou Y."/>
            <person name="Nelson D."/>
            <person name="Lehrach H."/>
            <person name="Reinhardt R."/>
            <person name="Naylor S.L."/>
            <person name="Yang H."/>
            <person name="Olson M."/>
            <person name="Weinstock G."/>
            <person name="Gibbs R.A."/>
        </authorList>
    </citation>
    <scope>NUCLEOTIDE SEQUENCE [LARGE SCALE GENOMIC DNA]</scope>
</reference>
<reference key="6">
    <citation type="submission" date="2005-09" db="EMBL/GenBank/DDBJ databases">
        <authorList>
            <person name="Mural R.J."/>
            <person name="Istrail S."/>
            <person name="Sutton G.G."/>
            <person name="Florea L."/>
            <person name="Halpern A.L."/>
            <person name="Mobarry C.M."/>
            <person name="Lippert R."/>
            <person name="Walenz B."/>
            <person name="Shatkay H."/>
            <person name="Dew I."/>
            <person name="Miller J.R."/>
            <person name="Flanigan M.J."/>
            <person name="Edwards N.J."/>
            <person name="Bolanos R."/>
            <person name="Fasulo D."/>
            <person name="Halldorsson B.V."/>
            <person name="Hannenhalli S."/>
            <person name="Turner R."/>
            <person name="Yooseph S."/>
            <person name="Lu F."/>
            <person name="Nusskern D.R."/>
            <person name="Shue B.C."/>
            <person name="Zheng X.H."/>
            <person name="Zhong F."/>
            <person name="Delcher A.L."/>
            <person name="Huson D.H."/>
            <person name="Kravitz S.A."/>
            <person name="Mouchard L."/>
            <person name="Reinert K."/>
            <person name="Remington K.A."/>
            <person name="Clark A.G."/>
            <person name="Waterman M.S."/>
            <person name="Eichler E.E."/>
            <person name="Adams M.D."/>
            <person name="Hunkapiller M.W."/>
            <person name="Myers E.W."/>
            <person name="Venter J.C."/>
        </authorList>
    </citation>
    <scope>NUCLEOTIDE SEQUENCE [LARGE SCALE GENOMIC DNA]</scope>
</reference>
<reference key="7">
    <citation type="journal article" date="2004" name="Genome Res.">
        <title>The status, quality, and expansion of the NIH full-length cDNA project: the Mammalian Gene Collection (MGC).</title>
        <authorList>
            <consortium name="The MGC Project Team"/>
        </authorList>
    </citation>
    <scope>NUCLEOTIDE SEQUENCE [LARGE SCALE MRNA] (ISOFORM 1)</scope>
    <source>
        <tissue>Brain</tissue>
    </source>
</reference>
<reference key="8">
    <citation type="journal article" date="2005" name="J. Proteome Res.">
        <title>Human plasma N-glycoproteome analysis by immunoaffinity subtraction, hydrazide chemistry, and mass spectrometry.</title>
        <authorList>
            <person name="Liu T."/>
            <person name="Qian W.-J."/>
            <person name="Gritsenko M.A."/>
            <person name="Camp D.G. II"/>
            <person name="Monroe M.E."/>
            <person name="Moore R.J."/>
            <person name="Smith R.D."/>
        </authorList>
    </citation>
    <scope>GLYCOSYLATION [LARGE SCALE ANALYSIS] AT ASN-37 AND ASN-136</scope>
    <source>
        <tissue>Plasma</tissue>
    </source>
</reference>
<reference key="9">
    <citation type="journal article" date="2013" name="Dev. Cell">
        <title>Fetuin-B, a liver-derived plasma protein is essential for fertilization.</title>
        <authorList>
            <person name="Dietzel E."/>
            <person name="Wessling J."/>
            <person name="Floehr J."/>
            <person name="Schafer C."/>
            <person name="Ensslen S."/>
            <person name="Denecke B."/>
            <person name="Rosing B."/>
            <person name="Neulen J."/>
            <person name="Veitinger T."/>
            <person name="Spehr M."/>
            <person name="Tropartz T."/>
            <person name="Tolba R."/>
            <person name="Renne T."/>
            <person name="Egert A."/>
            <person name="Schorle H."/>
            <person name="Gottenbusch Y."/>
            <person name="Hildebrand A."/>
            <person name="Yiallouros I."/>
            <person name="Stocker W."/>
            <person name="Weiskirchen R."/>
            <person name="Jahnen-Dechent W."/>
        </authorList>
    </citation>
    <scope>DEVELOPMENTAL STAGE</scope>
</reference>
<reference key="10">
    <citation type="journal article" date="2014" name="J. Proteomics">
        <title>An enzyme assisted RP-RPLC approach for in-depth analysis of human liver phosphoproteome.</title>
        <authorList>
            <person name="Bian Y."/>
            <person name="Song C."/>
            <person name="Cheng K."/>
            <person name="Dong M."/>
            <person name="Wang F."/>
            <person name="Huang J."/>
            <person name="Sun D."/>
            <person name="Wang L."/>
            <person name="Ye M."/>
            <person name="Zou H."/>
        </authorList>
    </citation>
    <scope>PHOSPHORYLATION [LARGE SCALE ANALYSIS] AT SER-315</scope>
    <scope>IDENTIFICATION BY MASS SPECTROMETRY [LARGE SCALE ANALYSIS]</scope>
    <source>
        <tissue>Liver</tissue>
    </source>
</reference>
<protein>
    <recommendedName>
        <fullName>Fetuin-B</fullName>
    </recommendedName>
    <alternativeName>
        <fullName>16G2</fullName>
    </alternativeName>
    <alternativeName>
        <fullName>Fetuin-like protein IRL685</fullName>
    </alternativeName>
    <alternativeName>
        <fullName>Gugu</fullName>
    </alternativeName>
</protein>
<gene>
    <name type="primary">FETUB</name>
</gene>
<evidence type="ECO:0000250" key="1"/>
<evidence type="ECO:0000250" key="2">
    <source>
        <dbReference type="UniProtKB" id="Q58D62"/>
    </source>
</evidence>
<evidence type="ECO:0000255" key="3"/>
<evidence type="ECO:0000255" key="4">
    <source>
        <dbReference type="PROSITE-ProRule" id="PRU00862"/>
    </source>
</evidence>
<evidence type="ECO:0000256" key="5">
    <source>
        <dbReference type="SAM" id="MobiDB-lite"/>
    </source>
</evidence>
<evidence type="ECO:0000269" key="6">
    <source>
    </source>
</evidence>
<evidence type="ECO:0000269" key="7">
    <source>
    </source>
</evidence>
<evidence type="ECO:0000303" key="8">
    <source>
    </source>
</evidence>
<evidence type="ECO:0000305" key="9"/>
<evidence type="ECO:0007744" key="10">
    <source>
    </source>
</evidence>
<evidence type="ECO:0007829" key="11">
    <source>
        <dbReference type="PDB" id="6SAZ"/>
    </source>
</evidence>
<evidence type="ECO:0007829" key="12">
    <source>
        <dbReference type="PDB" id="7UAI"/>
    </source>
</evidence>